<comment type="similarity">
    <text evidence="1">Belongs to the UPF0301 (AlgH) family.</text>
</comment>
<evidence type="ECO:0000255" key="1">
    <source>
        <dbReference type="HAMAP-Rule" id="MF_00758"/>
    </source>
</evidence>
<feature type="chain" id="PRO_1000148379" description="UPF0301 protein CCNA_03506">
    <location>
        <begin position="1"/>
        <end position="195"/>
    </location>
</feature>
<proteinExistence type="inferred from homology"/>
<sequence>MASLIDDDDGEFLIGRLLVAMPGIEDPRFERTVLYLCAHDEDAAMGLAVNRPVEGLTVFELLNRLGVRSEIQAPSDLVLLGGPLERERGFVLHTDDFSSPDSTLPVADGVALTATRDALDAMASAIKRPRKSLLALGYAGWGPGQLEQELRDNVWLICDADEGLLFDEDHEHKWTRALAKLGITADHLSATAGRA</sequence>
<protein>
    <recommendedName>
        <fullName evidence="1">UPF0301 protein CCNA_03506</fullName>
    </recommendedName>
</protein>
<name>Y3506_CAUVN</name>
<gene>
    <name type="ordered locus">CCNA_03506</name>
</gene>
<dbReference type="EMBL" id="CP001340">
    <property type="protein sequence ID" value="ACL96971.1"/>
    <property type="molecule type" value="Genomic_DNA"/>
</dbReference>
<dbReference type="RefSeq" id="WP_010921224.1">
    <property type="nucleotide sequence ID" value="NC_011916.1"/>
</dbReference>
<dbReference type="RefSeq" id="YP_002518879.1">
    <property type="nucleotide sequence ID" value="NC_011916.1"/>
</dbReference>
<dbReference type="SMR" id="B8H5C6"/>
<dbReference type="GeneID" id="7332503"/>
<dbReference type="KEGG" id="ccs:CCNA_03506"/>
<dbReference type="PATRIC" id="fig|565050.3.peg.3420"/>
<dbReference type="HOGENOM" id="CLU_057596_1_0_5"/>
<dbReference type="OrthoDB" id="9807486at2"/>
<dbReference type="PhylomeDB" id="B8H5C6"/>
<dbReference type="Proteomes" id="UP000001364">
    <property type="component" value="Chromosome"/>
</dbReference>
<dbReference type="GO" id="GO:0005829">
    <property type="term" value="C:cytosol"/>
    <property type="evidence" value="ECO:0007669"/>
    <property type="project" value="TreeGrafter"/>
</dbReference>
<dbReference type="Gene3D" id="3.40.1740.10">
    <property type="entry name" value="VC0467-like"/>
    <property type="match status" value="1"/>
</dbReference>
<dbReference type="HAMAP" id="MF_00758">
    <property type="entry name" value="UPF0301"/>
    <property type="match status" value="1"/>
</dbReference>
<dbReference type="InterPro" id="IPR003774">
    <property type="entry name" value="AlgH-like"/>
</dbReference>
<dbReference type="PANTHER" id="PTHR30327">
    <property type="entry name" value="UNCHARACTERIZED PROTEIN YQGE"/>
    <property type="match status" value="1"/>
</dbReference>
<dbReference type="PANTHER" id="PTHR30327:SF1">
    <property type="entry name" value="UPF0301 PROTEIN YQGE"/>
    <property type="match status" value="1"/>
</dbReference>
<dbReference type="Pfam" id="PF02622">
    <property type="entry name" value="DUF179"/>
    <property type="match status" value="1"/>
</dbReference>
<dbReference type="SUPFAM" id="SSF143456">
    <property type="entry name" value="VC0467-like"/>
    <property type="match status" value="1"/>
</dbReference>
<accession>B8H5C6</accession>
<keyword id="KW-1185">Reference proteome</keyword>
<reference key="1">
    <citation type="journal article" date="2010" name="J. Bacteriol.">
        <title>The genetic basis of laboratory adaptation in Caulobacter crescentus.</title>
        <authorList>
            <person name="Marks M.E."/>
            <person name="Castro-Rojas C.M."/>
            <person name="Teiling C."/>
            <person name="Du L."/>
            <person name="Kapatral V."/>
            <person name="Walunas T.L."/>
            <person name="Crosson S."/>
        </authorList>
    </citation>
    <scope>NUCLEOTIDE SEQUENCE [LARGE SCALE GENOMIC DNA]</scope>
    <source>
        <strain>NA1000 / CB15N</strain>
    </source>
</reference>
<organism>
    <name type="scientific">Caulobacter vibrioides (strain NA1000 / CB15N)</name>
    <name type="common">Caulobacter crescentus</name>
    <dbReference type="NCBI Taxonomy" id="565050"/>
    <lineage>
        <taxon>Bacteria</taxon>
        <taxon>Pseudomonadati</taxon>
        <taxon>Pseudomonadota</taxon>
        <taxon>Alphaproteobacteria</taxon>
        <taxon>Caulobacterales</taxon>
        <taxon>Caulobacteraceae</taxon>
        <taxon>Caulobacter</taxon>
    </lineage>
</organism>